<protein>
    <recommendedName>
        <fullName>Protein kinase C beta type</fullName>
        <shortName>PKC-B</shortName>
        <shortName>PKC-beta</shortName>
        <ecNumber evidence="2">2.7.11.13</ecNumber>
    </recommendedName>
</protein>
<sequence>MADPAAGPPPSEGEESTVRFARKGALRQKNVHEVKNHKFTARFFKQPTFCSHCTDFIWGFGKQGFQCQVCCFVVHKRCHEFVTFSCPGADKGPASDDPRSKHKFKIHTYSSPTFCDHCGSLLYGLIHQGMKCDTCMMNVHKRCVMNVPSLCGTDHTERRGRIYIQAHIDREVLIVVVRDAKNLVPMDPNGLSDPYVKLKLIPDPKSESKQKTKTIKCSLNPEWNETFRFQLKESDKDRRLSVEIWDWDLTSRNDFMGSLSFGISELQKAGVDGWFKLLSQEEGEYFNVPVPPEGSEGNEELRQKFERAKIGQGTKAPEEKTANTISKFDNNGNRDRMKLTDFNFLMVLGKGSFGKVMLSERKGTDELYAVKILKKDVVIQDDDVECTMVEKRVLALPGKPPFLTQLHSCFQTMDRLYFVMEYVNGGDLMYHIQQVGRFKEPHAVFYAAEIAIGLFFLQSKGIIYRDLKLDNVMLDSEGHIKIADFGMCKENIWDGVTTKTFCGTPDYIAPEIIAYQPYGKSVDWWAFGVLLYEMLAGQAPFEGEDEDELFQSIMEHNVAYPKSMSKEAVAICKGLMTKHPGKRLGCGPEGERDIKEHAFFRYIDWEKLERKEIQPPYKPKARDKRDTSNFDKEFTRQPVELTPTDKLFIMNLDQNEFAGFSYTNPEFVINV</sequence>
<keyword id="KW-0002">3D-structure</keyword>
<keyword id="KW-0007">Acetylation</keyword>
<keyword id="KW-1064">Adaptive immunity</keyword>
<keyword id="KW-0025">Alternative splicing</keyword>
<keyword id="KW-0053">Apoptosis</keyword>
<keyword id="KW-0067">ATP-binding</keyword>
<keyword id="KW-0106">Calcium</keyword>
<keyword id="KW-0156">Chromatin regulator</keyword>
<keyword id="KW-0963">Cytoplasm</keyword>
<keyword id="KW-0903">Direct protein sequencing</keyword>
<keyword id="KW-0391">Immunity</keyword>
<keyword id="KW-0418">Kinase</keyword>
<keyword id="KW-0472">Membrane</keyword>
<keyword id="KW-0479">Metal-binding</keyword>
<keyword id="KW-0547">Nucleotide-binding</keyword>
<keyword id="KW-0539">Nucleus</keyword>
<keyword id="KW-0597">Phosphoprotein</keyword>
<keyword id="KW-1185">Reference proteome</keyword>
<keyword id="KW-0677">Repeat</keyword>
<keyword id="KW-0723">Serine/threonine-protein kinase</keyword>
<keyword id="KW-0804">Transcription</keyword>
<keyword id="KW-0805">Transcription regulation</keyword>
<keyword id="KW-0808">Transferase</keyword>
<keyword id="KW-0862">Zinc</keyword>
<keyword id="KW-0863">Zinc-finger</keyword>
<dbReference type="EC" id="2.7.11.13" evidence="2"/>
<dbReference type="EMBL" id="M13706">
    <property type="protein sequence ID" value="AAA41875.1"/>
    <property type="molecule type" value="mRNA"/>
</dbReference>
<dbReference type="EMBL" id="K03485">
    <property type="protein sequence ID" value="AAA41864.1"/>
    <property type="molecule type" value="mRNA"/>
</dbReference>
<dbReference type="EMBL" id="K03486">
    <property type="protein sequence ID" value="AAA41865.1"/>
    <property type="molecule type" value="mRNA"/>
</dbReference>
<dbReference type="EMBL" id="X04439">
    <property type="protein sequence ID" value="CAA28035.1"/>
    <property type="molecule type" value="Genomic_DNA"/>
</dbReference>
<dbReference type="EMBL" id="X04440">
    <property type="protein sequence ID" value="CAA28036.1"/>
    <property type="molecule type" value="mRNA"/>
</dbReference>
<dbReference type="EMBL" id="M19007">
    <property type="protein sequence ID" value="AAA41868.1"/>
    <property type="molecule type" value="mRNA"/>
</dbReference>
<dbReference type="EMBL" id="X04139">
    <property type="protein sequence ID" value="CAA27756.1"/>
    <property type="molecule type" value="mRNA"/>
</dbReference>
<dbReference type="EMBL" id="M15522">
    <property type="protein sequence ID" value="AAA41876.1"/>
    <property type="molecule type" value="mRNA"/>
</dbReference>
<dbReference type="PIR" id="A00622">
    <property type="entry name" value="KIRTC1"/>
</dbReference>
<dbReference type="RefSeq" id="NP_001165776.1">
    <property type="nucleotide sequence ID" value="NM_001172305.1"/>
</dbReference>
<dbReference type="RefSeq" id="XP_038957160.1">
    <molecule id="P68403-2"/>
    <property type="nucleotide sequence ID" value="XM_039101232.2"/>
</dbReference>
<dbReference type="RefSeq" id="XP_038957162.1">
    <molecule id="P68403-1"/>
    <property type="nucleotide sequence ID" value="XM_039101234.2"/>
</dbReference>
<dbReference type="PDB" id="1A25">
    <property type="method" value="X-ray"/>
    <property type="resolution" value="2.70 A"/>
    <property type="chains" value="A/B=154-289"/>
</dbReference>
<dbReference type="PDB" id="3PFQ">
    <property type="method" value="X-ray"/>
    <property type="resolution" value="4.00 A"/>
    <property type="chains" value="A=1-661"/>
</dbReference>
<dbReference type="PDBsum" id="1A25"/>
<dbReference type="PDBsum" id="3PFQ"/>
<dbReference type="SMR" id="P68403"/>
<dbReference type="BioGRID" id="247103">
    <property type="interactions" value="17"/>
</dbReference>
<dbReference type="FunCoup" id="P68403">
    <property type="interactions" value="1958"/>
</dbReference>
<dbReference type="IntAct" id="P68403">
    <property type="interactions" value="7"/>
</dbReference>
<dbReference type="MINT" id="P68403"/>
<dbReference type="STRING" id="10116.ENSRNOP00000016417"/>
<dbReference type="BindingDB" id="P68403"/>
<dbReference type="ChEMBL" id="CHEMBL3020"/>
<dbReference type="DrugCentral" id="P68403"/>
<dbReference type="GlyGen" id="P68403">
    <property type="glycosylation" value="1 site, 1 O-linked glycan (1 site)"/>
</dbReference>
<dbReference type="iPTMnet" id="P68403"/>
<dbReference type="PhosphoSitePlus" id="P68403"/>
<dbReference type="jPOST" id="P68403"/>
<dbReference type="PaxDb" id="10116-ENSRNOP00000016417"/>
<dbReference type="Ensembl" id="ENSRNOT00000016418.7">
    <molecule id="P68403-1"/>
    <property type="protein sequence ID" value="ENSRNOP00000016417.5"/>
    <property type="gene ID" value="ENSRNOG00000012061.9"/>
</dbReference>
<dbReference type="Ensembl" id="ENSRNOT00000078705.2">
    <molecule id="P68403-2"/>
    <property type="protein sequence ID" value="ENSRNOP00000073511.2"/>
    <property type="gene ID" value="ENSRNOG00000012061.9"/>
</dbReference>
<dbReference type="GeneID" id="25023"/>
<dbReference type="KEGG" id="rno:25023"/>
<dbReference type="UCSC" id="RGD:3396">
    <property type="organism name" value="rat"/>
</dbReference>
<dbReference type="AGR" id="RGD:3396"/>
<dbReference type="CTD" id="5579"/>
<dbReference type="RGD" id="3396">
    <property type="gene designation" value="Prkcb"/>
</dbReference>
<dbReference type="eggNOG" id="KOG0696">
    <property type="taxonomic scope" value="Eukaryota"/>
</dbReference>
<dbReference type="GeneTree" id="ENSGT00940000155217"/>
<dbReference type="InParanoid" id="P68403"/>
<dbReference type="OMA" id="YYNINIS"/>
<dbReference type="PhylomeDB" id="P68403"/>
<dbReference type="BRENDA" id="2.7.1.107">
    <property type="organism ID" value="5301"/>
</dbReference>
<dbReference type="Reactome" id="R-RNO-114516">
    <property type="pathway name" value="Disinhibition of SNARE formation"/>
</dbReference>
<dbReference type="Reactome" id="R-RNO-1169091">
    <property type="pathway name" value="Activation of NF-kappaB in B cells"/>
</dbReference>
<dbReference type="Reactome" id="R-RNO-416993">
    <property type="pathway name" value="Trafficking of GluR2-containing AMPA receptors"/>
</dbReference>
<dbReference type="Reactome" id="R-RNO-4419969">
    <property type="pathway name" value="Depolymerization of the Nuclear Lamina"/>
</dbReference>
<dbReference type="Reactome" id="R-RNO-5099900">
    <property type="pathway name" value="WNT5A-dependent internalization of FZD4"/>
</dbReference>
<dbReference type="Reactome" id="R-RNO-5218921">
    <property type="pathway name" value="VEGFR2 mediated cell proliferation"/>
</dbReference>
<dbReference type="Reactome" id="R-RNO-5668599">
    <property type="pathway name" value="RHO GTPases Activate NADPH Oxidases"/>
</dbReference>
<dbReference type="Reactome" id="R-RNO-76005">
    <property type="pathway name" value="Response to elevated platelet cytosolic Ca2+"/>
</dbReference>
<dbReference type="EvolutionaryTrace" id="P68403"/>
<dbReference type="PRO" id="PR:P68403"/>
<dbReference type="Proteomes" id="UP000002494">
    <property type="component" value="Chromosome 1"/>
</dbReference>
<dbReference type="GO" id="GO:0031526">
    <property type="term" value="C:brush border membrane"/>
    <property type="evidence" value="ECO:0000314"/>
    <property type="project" value="RGD"/>
</dbReference>
<dbReference type="GO" id="GO:0044305">
    <property type="term" value="C:calyx of Held"/>
    <property type="evidence" value="ECO:0000266"/>
    <property type="project" value="RGD"/>
</dbReference>
<dbReference type="GO" id="GO:0005813">
    <property type="term" value="C:centrosome"/>
    <property type="evidence" value="ECO:0000314"/>
    <property type="project" value="RGD"/>
</dbReference>
<dbReference type="GO" id="GO:0005737">
    <property type="term" value="C:cytoplasm"/>
    <property type="evidence" value="ECO:0000266"/>
    <property type="project" value="RGD"/>
</dbReference>
<dbReference type="GO" id="GO:0005829">
    <property type="term" value="C:cytosol"/>
    <property type="evidence" value="ECO:0000314"/>
    <property type="project" value="RGD"/>
</dbReference>
<dbReference type="GO" id="GO:0005634">
    <property type="term" value="C:nucleus"/>
    <property type="evidence" value="ECO:0000250"/>
    <property type="project" value="UniProtKB"/>
</dbReference>
<dbReference type="GO" id="GO:0005886">
    <property type="term" value="C:plasma membrane"/>
    <property type="evidence" value="ECO:0000266"/>
    <property type="project" value="RGD"/>
</dbReference>
<dbReference type="GO" id="GO:0099523">
    <property type="term" value="C:presynaptic cytosol"/>
    <property type="evidence" value="ECO:0000266"/>
    <property type="project" value="RGD"/>
</dbReference>
<dbReference type="GO" id="GO:0008091">
    <property type="term" value="C:spectrin"/>
    <property type="evidence" value="ECO:0000266"/>
    <property type="project" value="RGD"/>
</dbReference>
<dbReference type="GO" id="GO:0005524">
    <property type="term" value="F:ATP binding"/>
    <property type="evidence" value="ECO:0007669"/>
    <property type="project" value="UniProtKB-KW"/>
</dbReference>
<dbReference type="GO" id="GO:0005246">
    <property type="term" value="F:calcium channel regulator activity"/>
    <property type="evidence" value="ECO:0000266"/>
    <property type="project" value="RGD"/>
</dbReference>
<dbReference type="GO" id="GO:0004698">
    <property type="term" value="F:calcium,diacylglycerol-dependent serine/threonine kinase activity"/>
    <property type="evidence" value="ECO:0000266"/>
    <property type="project" value="RGD"/>
</dbReference>
<dbReference type="GO" id="GO:0003682">
    <property type="term" value="F:chromatin binding"/>
    <property type="evidence" value="ECO:0000250"/>
    <property type="project" value="UniProtKB"/>
</dbReference>
<dbReference type="GO" id="GO:0004697">
    <property type="term" value="F:diacylglycerol-dependent serine/threonine kinase activity"/>
    <property type="evidence" value="ECO:0000266"/>
    <property type="project" value="RGD"/>
</dbReference>
<dbReference type="GO" id="GO:0042393">
    <property type="term" value="F:histone binding"/>
    <property type="evidence" value="ECO:0000250"/>
    <property type="project" value="UniProtKB"/>
</dbReference>
<dbReference type="GO" id="GO:0035403">
    <property type="term" value="F:histone H3T6 kinase activity"/>
    <property type="evidence" value="ECO:0000250"/>
    <property type="project" value="UniProtKB"/>
</dbReference>
<dbReference type="GO" id="GO:0050681">
    <property type="term" value="F:nuclear androgen receptor binding"/>
    <property type="evidence" value="ECO:0000250"/>
    <property type="project" value="UniProtKB"/>
</dbReference>
<dbReference type="GO" id="GO:0005080">
    <property type="term" value="F:protein kinase C binding"/>
    <property type="evidence" value="ECO:0000266"/>
    <property type="project" value="RGD"/>
</dbReference>
<dbReference type="GO" id="GO:0106310">
    <property type="term" value="F:protein serine kinase activity"/>
    <property type="evidence" value="ECO:0007669"/>
    <property type="project" value="RHEA"/>
</dbReference>
<dbReference type="GO" id="GO:0004674">
    <property type="term" value="F:protein serine/threonine kinase activity"/>
    <property type="evidence" value="ECO:0000266"/>
    <property type="project" value="RGD"/>
</dbReference>
<dbReference type="GO" id="GO:0003713">
    <property type="term" value="F:transcription coactivator activity"/>
    <property type="evidence" value="ECO:0000250"/>
    <property type="project" value="UniProtKB"/>
</dbReference>
<dbReference type="GO" id="GO:0008270">
    <property type="term" value="F:zinc ion binding"/>
    <property type="evidence" value="ECO:0007669"/>
    <property type="project" value="UniProtKB-KW"/>
</dbReference>
<dbReference type="GO" id="GO:0002250">
    <property type="term" value="P:adaptive immune response"/>
    <property type="evidence" value="ECO:0007669"/>
    <property type="project" value="UniProtKB-KW"/>
</dbReference>
<dbReference type="GO" id="GO:0006915">
    <property type="term" value="P:apoptotic process"/>
    <property type="evidence" value="ECO:0007669"/>
    <property type="project" value="UniProtKB-KW"/>
</dbReference>
<dbReference type="GO" id="GO:0042113">
    <property type="term" value="P:B cell activation"/>
    <property type="evidence" value="ECO:0000250"/>
    <property type="project" value="UniProtKB"/>
</dbReference>
<dbReference type="GO" id="GO:0050853">
    <property type="term" value="P:B cell receptor signaling pathway"/>
    <property type="evidence" value="ECO:0000250"/>
    <property type="project" value="UniProtKB"/>
</dbReference>
<dbReference type="GO" id="GO:0006816">
    <property type="term" value="P:calcium ion transport"/>
    <property type="evidence" value="ECO:0000266"/>
    <property type="project" value="RGD"/>
</dbReference>
<dbReference type="GO" id="GO:0071322">
    <property type="term" value="P:cellular response to carbohydrate stimulus"/>
    <property type="evidence" value="ECO:0000266"/>
    <property type="project" value="RGD"/>
</dbReference>
<dbReference type="GO" id="GO:0018894">
    <property type="term" value="P:dibenzo-p-dioxin metabolic process"/>
    <property type="evidence" value="ECO:0000270"/>
    <property type="project" value="RGD"/>
</dbReference>
<dbReference type="GO" id="GO:0006874">
    <property type="term" value="P:intracellular calcium ion homeostasis"/>
    <property type="evidence" value="ECO:0000266"/>
    <property type="project" value="RGD"/>
</dbReference>
<dbReference type="GO" id="GO:0035556">
    <property type="term" value="P:intracellular signal transduction"/>
    <property type="evidence" value="ECO:0000318"/>
    <property type="project" value="GO_Central"/>
</dbReference>
<dbReference type="GO" id="GO:0010829">
    <property type="term" value="P:negative regulation of D-glucose transmembrane transport"/>
    <property type="evidence" value="ECO:0000250"/>
    <property type="project" value="UniProtKB"/>
</dbReference>
<dbReference type="GO" id="GO:0046627">
    <property type="term" value="P:negative regulation of insulin receptor signaling pathway"/>
    <property type="evidence" value="ECO:0000314"/>
    <property type="project" value="UniProtKB"/>
</dbReference>
<dbReference type="GO" id="GO:0007207">
    <property type="term" value="P:phospholipase C-activating G protein-coupled acetylcholine receptor signaling pathway"/>
    <property type="evidence" value="ECO:0000266"/>
    <property type="project" value="RGD"/>
</dbReference>
<dbReference type="GO" id="GO:0045766">
    <property type="term" value="P:positive regulation of angiogenesis"/>
    <property type="evidence" value="ECO:0000250"/>
    <property type="project" value="UniProtKB"/>
</dbReference>
<dbReference type="GO" id="GO:0043123">
    <property type="term" value="P:positive regulation of canonical NF-kappaB signal transduction"/>
    <property type="evidence" value="ECO:0000250"/>
    <property type="project" value="UniProtKB"/>
</dbReference>
<dbReference type="GO" id="GO:0032024">
    <property type="term" value="P:positive regulation of insulin secretion"/>
    <property type="evidence" value="ECO:0000266"/>
    <property type="project" value="RGD"/>
</dbReference>
<dbReference type="GO" id="GO:0042488">
    <property type="term" value="P:positive regulation of odontogenesis of dentin-containing tooth"/>
    <property type="evidence" value="ECO:0000270"/>
    <property type="project" value="RGD"/>
</dbReference>
<dbReference type="GO" id="GO:0030949">
    <property type="term" value="P:positive regulation of vascular endothelial growth factor receptor signaling pathway"/>
    <property type="evidence" value="ECO:0000250"/>
    <property type="project" value="UniProtKB"/>
</dbReference>
<dbReference type="GO" id="GO:0099171">
    <property type="term" value="P:presynaptic modulation of chemical synaptic transmission"/>
    <property type="evidence" value="ECO:0000266"/>
    <property type="project" value="RGD"/>
</dbReference>
<dbReference type="GO" id="GO:0070528">
    <property type="term" value="P:protein kinase C signaling"/>
    <property type="evidence" value="ECO:0000250"/>
    <property type="project" value="UniProtKB"/>
</dbReference>
<dbReference type="GO" id="GO:0010827">
    <property type="term" value="P:regulation of D-glucose transmembrane transport"/>
    <property type="evidence" value="ECO:0000250"/>
    <property type="project" value="UniProtKB"/>
</dbReference>
<dbReference type="GO" id="GO:0014059">
    <property type="term" value="P:regulation of dopamine secretion"/>
    <property type="evidence" value="ECO:0000315"/>
    <property type="project" value="RGD"/>
</dbReference>
<dbReference type="GO" id="GO:0040008">
    <property type="term" value="P:regulation of growth"/>
    <property type="evidence" value="ECO:0000315"/>
    <property type="project" value="RGD"/>
</dbReference>
<dbReference type="GO" id="GO:2000300">
    <property type="term" value="P:regulation of synaptic vesicle exocytosis"/>
    <property type="evidence" value="ECO:0000266"/>
    <property type="project" value="RGD"/>
</dbReference>
<dbReference type="GO" id="GO:0006357">
    <property type="term" value="P:regulation of transcription by RNA polymerase II"/>
    <property type="evidence" value="ECO:0000250"/>
    <property type="project" value="UniProtKB"/>
</dbReference>
<dbReference type="GO" id="GO:1990776">
    <property type="term" value="P:response to angiotensin"/>
    <property type="evidence" value="ECO:0000314"/>
    <property type="project" value="RGD"/>
</dbReference>
<dbReference type="GO" id="GO:0045471">
    <property type="term" value="P:response to ethanol"/>
    <property type="evidence" value="ECO:0000270"/>
    <property type="project" value="RGD"/>
</dbReference>
<dbReference type="GO" id="GO:0009749">
    <property type="term" value="P:response to glucose"/>
    <property type="evidence" value="ECO:0000270"/>
    <property type="project" value="RGD"/>
</dbReference>
<dbReference type="GO" id="GO:0033280">
    <property type="term" value="P:response to vitamin D"/>
    <property type="evidence" value="ECO:0000270"/>
    <property type="project" value="RGD"/>
</dbReference>
<dbReference type="GO" id="GO:0009410">
    <property type="term" value="P:response to xenobiotic stimulus"/>
    <property type="evidence" value="ECO:0000315"/>
    <property type="project" value="RGD"/>
</dbReference>
<dbReference type="CDD" id="cd20833">
    <property type="entry name" value="C1_cPKC_rpt1"/>
    <property type="match status" value="1"/>
</dbReference>
<dbReference type="CDD" id="cd20836">
    <property type="entry name" value="C1_cPKC_rpt2"/>
    <property type="match status" value="1"/>
</dbReference>
<dbReference type="CDD" id="cd04026">
    <property type="entry name" value="C2_PKC_alpha_gamma"/>
    <property type="match status" value="1"/>
</dbReference>
<dbReference type="CDD" id="cd05616">
    <property type="entry name" value="STKc_cPKC_beta"/>
    <property type="match status" value="1"/>
</dbReference>
<dbReference type="FunFam" id="2.60.40.150:FF:000012">
    <property type="entry name" value="Kinase C alpha type"/>
    <property type="match status" value="1"/>
</dbReference>
<dbReference type="FunFam" id="1.10.510.10:FF:000023">
    <property type="entry name" value="Protein kinase C"/>
    <property type="match status" value="1"/>
</dbReference>
<dbReference type="FunFam" id="3.30.200.20:FF:000080">
    <property type="entry name" value="Protein kinase C"/>
    <property type="match status" value="1"/>
</dbReference>
<dbReference type="FunFam" id="3.30.60.20:FF:000006">
    <property type="entry name" value="Protein kinase C"/>
    <property type="match status" value="1"/>
</dbReference>
<dbReference type="FunFam" id="3.30.60.20:FF:000031">
    <property type="entry name" value="Protein kinase C alpha"/>
    <property type="match status" value="1"/>
</dbReference>
<dbReference type="Gene3D" id="3.30.60.20">
    <property type="match status" value="2"/>
</dbReference>
<dbReference type="Gene3D" id="2.60.40.150">
    <property type="entry name" value="C2 domain"/>
    <property type="match status" value="1"/>
</dbReference>
<dbReference type="Gene3D" id="3.30.200.20">
    <property type="entry name" value="Phosphorylase Kinase, domain 1"/>
    <property type="match status" value="2"/>
</dbReference>
<dbReference type="Gene3D" id="1.10.510.10">
    <property type="entry name" value="Transferase(Phosphotransferase) domain 1"/>
    <property type="match status" value="1"/>
</dbReference>
<dbReference type="InterPro" id="IPR000961">
    <property type="entry name" value="AGC-kinase_C"/>
</dbReference>
<dbReference type="InterPro" id="IPR046349">
    <property type="entry name" value="C1-like_sf"/>
</dbReference>
<dbReference type="InterPro" id="IPR000008">
    <property type="entry name" value="C2_dom"/>
</dbReference>
<dbReference type="InterPro" id="IPR035892">
    <property type="entry name" value="C2_domain_sf"/>
</dbReference>
<dbReference type="InterPro" id="IPR034664">
    <property type="entry name" value="cPKC-beta"/>
</dbReference>
<dbReference type="InterPro" id="IPR020454">
    <property type="entry name" value="DAG/PE-bd"/>
</dbReference>
<dbReference type="InterPro" id="IPR011009">
    <property type="entry name" value="Kinase-like_dom_sf"/>
</dbReference>
<dbReference type="InterPro" id="IPR002219">
    <property type="entry name" value="PE/DAG-bd"/>
</dbReference>
<dbReference type="InterPro" id="IPR017892">
    <property type="entry name" value="Pkinase_C"/>
</dbReference>
<dbReference type="InterPro" id="IPR000719">
    <property type="entry name" value="Prot_kinase_dom"/>
</dbReference>
<dbReference type="InterPro" id="IPR017441">
    <property type="entry name" value="Protein_kinase_ATP_BS"/>
</dbReference>
<dbReference type="InterPro" id="IPR014375">
    <property type="entry name" value="Protein_kinase_C_a/b/g"/>
</dbReference>
<dbReference type="InterPro" id="IPR008271">
    <property type="entry name" value="Ser/Thr_kinase_AS"/>
</dbReference>
<dbReference type="PANTHER" id="PTHR24351">
    <property type="entry name" value="RIBOSOMAL PROTEIN S6 KINASE"/>
    <property type="match status" value="1"/>
</dbReference>
<dbReference type="Pfam" id="PF00130">
    <property type="entry name" value="C1_1"/>
    <property type="match status" value="2"/>
</dbReference>
<dbReference type="Pfam" id="PF00168">
    <property type="entry name" value="C2"/>
    <property type="match status" value="1"/>
</dbReference>
<dbReference type="Pfam" id="PF00069">
    <property type="entry name" value="Pkinase"/>
    <property type="match status" value="1"/>
</dbReference>
<dbReference type="Pfam" id="PF00433">
    <property type="entry name" value="Pkinase_C"/>
    <property type="match status" value="1"/>
</dbReference>
<dbReference type="PIRSF" id="PIRSF000550">
    <property type="entry name" value="PKC_alpha"/>
    <property type="match status" value="1"/>
</dbReference>
<dbReference type="PRINTS" id="PR00360">
    <property type="entry name" value="C2DOMAIN"/>
</dbReference>
<dbReference type="PRINTS" id="PR00008">
    <property type="entry name" value="DAGPEDOMAIN"/>
</dbReference>
<dbReference type="SMART" id="SM00109">
    <property type="entry name" value="C1"/>
    <property type="match status" value="2"/>
</dbReference>
<dbReference type="SMART" id="SM00239">
    <property type="entry name" value="C2"/>
    <property type="match status" value="1"/>
</dbReference>
<dbReference type="SMART" id="SM00133">
    <property type="entry name" value="S_TK_X"/>
    <property type="match status" value="1"/>
</dbReference>
<dbReference type="SMART" id="SM00220">
    <property type="entry name" value="S_TKc"/>
    <property type="match status" value="1"/>
</dbReference>
<dbReference type="SUPFAM" id="SSF49562">
    <property type="entry name" value="C2 domain (Calcium/lipid-binding domain, CaLB)"/>
    <property type="match status" value="1"/>
</dbReference>
<dbReference type="SUPFAM" id="SSF57889">
    <property type="entry name" value="Cysteine-rich domain"/>
    <property type="match status" value="2"/>
</dbReference>
<dbReference type="SUPFAM" id="SSF56112">
    <property type="entry name" value="Protein kinase-like (PK-like)"/>
    <property type="match status" value="1"/>
</dbReference>
<dbReference type="PROSITE" id="PS51285">
    <property type="entry name" value="AGC_KINASE_CTER"/>
    <property type="match status" value="1"/>
</dbReference>
<dbReference type="PROSITE" id="PS50004">
    <property type="entry name" value="C2"/>
    <property type="match status" value="1"/>
</dbReference>
<dbReference type="PROSITE" id="PS00107">
    <property type="entry name" value="PROTEIN_KINASE_ATP"/>
    <property type="match status" value="1"/>
</dbReference>
<dbReference type="PROSITE" id="PS50011">
    <property type="entry name" value="PROTEIN_KINASE_DOM"/>
    <property type="match status" value="1"/>
</dbReference>
<dbReference type="PROSITE" id="PS00108">
    <property type="entry name" value="PROTEIN_KINASE_ST"/>
    <property type="match status" value="1"/>
</dbReference>
<dbReference type="PROSITE" id="PS00479">
    <property type="entry name" value="ZF_DAG_PE_1"/>
    <property type="match status" value="2"/>
</dbReference>
<dbReference type="PROSITE" id="PS50081">
    <property type="entry name" value="ZF_DAG_PE_2"/>
    <property type="match status" value="2"/>
</dbReference>
<accession>P68403</accession>
<accession>P04410</accession>
<accession>P04411</accession>
<evidence type="ECO:0000250" key="1"/>
<evidence type="ECO:0000250" key="2">
    <source>
        <dbReference type="UniProtKB" id="P05771"/>
    </source>
</evidence>
<evidence type="ECO:0000250" key="3">
    <source>
        <dbReference type="UniProtKB" id="P68404"/>
    </source>
</evidence>
<evidence type="ECO:0000255" key="4">
    <source>
        <dbReference type="PROSITE-ProRule" id="PRU00041"/>
    </source>
</evidence>
<evidence type="ECO:0000255" key="5">
    <source>
        <dbReference type="PROSITE-ProRule" id="PRU00159"/>
    </source>
</evidence>
<evidence type="ECO:0000255" key="6">
    <source>
        <dbReference type="PROSITE-ProRule" id="PRU00226"/>
    </source>
</evidence>
<evidence type="ECO:0000255" key="7">
    <source>
        <dbReference type="PROSITE-ProRule" id="PRU00618"/>
    </source>
</evidence>
<evidence type="ECO:0000255" key="8">
    <source>
        <dbReference type="PROSITE-ProRule" id="PRU10027"/>
    </source>
</evidence>
<evidence type="ECO:0000256" key="9">
    <source>
        <dbReference type="SAM" id="MobiDB-lite"/>
    </source>
</evidence>
<evidence type="ECO:0000269" key="10">
    <source>
    </source>
</evidence>
<evidence type="ECO:0000269" key="11">
    <source>
    </source>
</evidence>
<evidence type="ECO:0000269" key="12">
    <source>
    </source>
</evidence>
<evidence type="ECO:0000269" key="13">
    <source>
    </source>
</evidence>
<evidence type="ECO:0000269" key="14">
    <source>
    </source>
</evidence>
<evidence type="ECO:0000269" key="15">
    <source>
    </source>
</evidence>
<evidence type="ECO:0000269" key="16">
    <source>
    </source>
</evidence>
<evidence type="ECO:0000269" key="17">
    <source>
    </source>
</evidence>
<evidence type="ECO:0000269" key="18">
    <source>
    </source>
</evidence>
<evidence type="ECO:0000303" key="19">
    <source>
    </source>
</evidence>
<evidence type="ECO:0000303" key="20">
    <source>
    </source>
</evidence>
<evidence type="ECO:0000305" key="21"/>
<evidence type="ECO:0000305" key="22">
    <source>
    </source>
</evidence>
<evidence type="ECO:0000305" key="23">
    <source>
    </source>
</evidence>
<evidence type="ECO:0000305" key="24">
    <source>
    </source>
</evidence>
<evidence type="ECO:0007744" key="25">
    <source>
    </source>
</evidence>
<evidence type="ECO:0007829" key="26">
    <source>
        <dbReference type="PDB" id="1A25"/>
    </source>
</evidence>
<gene>
    <name type="primary">Prkcb</name>
    <name type="synonym">Pkcb</name>
    <name type="synonym">Prkcb1</name>
</gene>
<comment type="function">
    <text evidence="2 3 10 11 12">Calcium-activated, phospholipid- and diacylglycerol (DAG)-dependent serine/threonine-protein kinase involved in various cellular processes such as regulation of the B-cell receptor (BCR) signalosome, oxidative stress-induced apoptosis, androgen receptor-dependent transcription regulation, insulin signaling and endothelial cells proliferation. Plays a key role in B-cell activation by regulating BCR-induced NF-kappa-B activation. Mediates the activation of the canonical NF-kappa-B pathway (NFKB1) by direct phosphorylation of CARD11/CARMA1 at 'Ser-559', 'Ser-644' and 'Ser-652'. Phosphorylation induces CARD11/CARMA1 association with lipid rafts and recruitment of the BCL10-MALT1 complex as well as MAP3K7/TAK1, which then activates IKK complex, resulting in nuclear translocation and activation of NFKB1. Plays a direct role in the negative feedback regulation of the BCR signaling, by down-modulating BTK function via direct phosphorylation of BTK at 'Ser-180', which results in the alteration of BTK plasma membrane localization and in turn inhibition of BTK activity. Involved in apoptosis following oxidative damage: in case of oxidative conditions, specifically phosphorylates 'Ser-36' of isoform p66Shc of SHC1, leading to mitochondrial accumulation of p66Shc, where p66Shc acts as a reactive oxygen species producer. Acts as a coactivator of androgen receptor (ANDR)-dependent transcription, by being recruited to ANDR target genes and specifically mediating phosphorylation of 'Thr-6' of histone H3 (H3T6ph), a specific tag for epigenetic transcriptional activation that prevents demethylation of histone H3 'Lys-4' (H3K4me) by LSD1/KDM1A. In insulin signaling, may function downstream of IRS1 in muscle cells and mediate insulin-dependent DNA synthesis through the RAF1-MAPK/ERK signaling cascade. Participates in the regulation of glucose transport in adipocytes by negatively modulating the insulin-stimulated translocation of the glucose transporter SLC2A4/GLUT4. Phosphorylates SLC2A1/GLUT1, promoting glucose uptake by SLC2A1/GLUT1. Under high glucose in pancreatic beta-cells, is probably involved in the inhibition of the insulin gene transcription, via regulation of MYC expression. In endothelial cells, activation of PRKCB induces increased phosphorylation of RB1, increased VEGFA-induced cell proliferation, and inhibits PI3K/AKT-dependent nitric oxide synthase (NOS3/eNOS) regulation by insulin, which causes endothelial dysfunction. Also involved in triglyceride homeostasis (By similarity). Phosphorylates ATF2 which promotes cooperation between ATF2 and JUN, activating transcription. Phosphorylates KLHL3 in response to angiotensin II signaling, decreasing the interaction between KLHL3 and WNK4 (By similarity). Phosphorylates and activates LRRK1, which phosphorylates RAB proteins involved in intracellular trafficking (By similarity).</text>
</comment>
<comment type="catalytic activity">
    <reaction evidence="2">
        <text>L-seryl-[protein] + ATP = O-phospho-L-seryl-[protein] + ADP + H(+)</text>
        <dbReference type="Rhea" id="RHEA:17989"/>
        <dbReference type="Rhea" id="RHEA-COMP:9863"/>
        <dbReference type="Rhea" id="RHEA-COMP:11604"/>
        <dbReference type="ChEBI" id="CHEBI:15378"/>
        <dbReference type="ChEBI" id="CHEBI:29999"/>
        <dbReference type="ChEBI" id="CHEBI:30616"/>
        <dbReference type="ChEBI" id="CHEBI:83421"/>
        <dbReference type="ChEBI" id="CHEBI:456216"/>
        <dbReference type="EC" id="2.7.11.13"/>
    </reaction>
</comment>
<comment type="catalytic activity">
    <reaction evidence="2">
        <text>L-threonyl-[protein] + ATP = O-phospho-L-threonyl-[protein] + ADP + H(+)</text>
        <dbReference type="Rhea" id="RHEA:46608"/>
        <dbReference type="Rhea" id="RHEA-COMP:11060"/>
        <dbReference type="Rhea" id="RHEA-COMP:11605"/>
        <dbReference type="ChEBI" id="CHEBI:15378"/>
        <dbReference type="ChEBI" id="CHEBI:30013"/>
        <dbReference type="ChEBI" id="CHEBI:30616"/>
        <dbReference type="ChEBI" id="CHEBI:61977"/>
        <dbReference type="ChEBI" id="CHEBI:456216"/>
        <dbReference type="EC" id="2.7.11.13"/>
    </reaction>
</comment>
<comment type="cofactor">
    <cofactor evidence="4 13 18">
        <name>Ca(2+)</name>
        <dbReference type="ChEBI" id="CHEBI:29108"/>
    </cofactor>
    <text evidence="13 18">Binds 3 Ca(2+) ions per subunit. The ions are bound to the C2 domain.</text>
</comment>
<comment type="activity regulation">
    <text evidence="1">Classical (or conventional) PKCs (PRKCA, PRKCB and PRKCG) are activated by calcium and diacylglycerol (DAG) in the presence of phosphatidylserine. Three specific sites; Thr-500 (activation loop of the kinase domain), Thr-642 (turn motif) and Ser-661 (hydrophobic region), need to be phosphorylated for its full activation. Specifically inhibited by enzastaurin (LY317615) (By similarity).</text>
</comment>
<comment type="subunit">
    <text evidence="1">Interacts with PDK1. Interacts in vitro with PRKCBP1. Interacts with PHLPP1 and PHLPP2; both proteins mediate its dephosphorylation. Interacts with KDM1A/LSD1, PKN1 and ANDR (By similarity).</text>
</comment>
<comment type="interaction">
    <interactant intactId="EBI-397072">
        <id>P68403</id>
    </interactant>
    <interactant intactId="EBI-6597520">
        <id>P18052</id>
        <label>Ptpra</label>
    </interactant>
    <organismsDiffer>true</organismsDiffer>
    <experiments>3</experiments>
</comment>
<comment type="interaction">
    <interactant intactId="EBI-12559950">
        <id>P68403-1</id>
    </interactant>
    <interactant intactId="EBI-918433">
        <id>Q62920</id>
        <label>Pdlim5</label>
    </interactant>
    <organismsDiffer>false</organismsDiffer>
    <experiments>5</experiments>
</comment>
<comment type="interaction">
    <interactant intactId="EBI-397092">
        <id>P68403-2</id>
    </interactant>
    <interactant intactId="EBI-726015">
        <id>Q8WV44-2</id>
        <label>TRIM41</label>
    </interactant>
    <organismsDiffer>true</organismsDiffer>
    <experiments>3</experiments>
</comment>
<comment type="subcellular location">
    <subcellularLocation>
        <location>Cytoplasm</location>
    </subcellularLocation>
    <subcellularLocation>
        <location evidence="1">Nucleus</location>
    </subcellularLocation>
    <subcellularLocation>
        <location>Membrane</location>
        <topology>Peripheral membrane protein</topology>
    </subcellularLocation>
</comment>
<comment type="alternative products">
    <event type="alternative splicing"/>
    <isoform>
        <id>P68403-1</id>
        <id>P04410-1</id>
        <name>Beta-I</name>
        <sequence type="displayed"/>
    </isoform>
    <isoform>
        <id>P68403-2</id>
        <id>P04410-2</id>
        <name>Beta-II</name>
        <sequence type="described" ref="VSP_004739"/>
    </isoform>
</comment>
<comment type="PTM">
    <text evidence="13 14 16 17">Phosphorylation on Thr-500 of isoform beta-I, within the activation loop, renders it competent to autophosphorylate. Subsequent autophosphorylation of Thr-642 maintains catalytic competence, and autophosphorylation on Ser-661 appears to release the kinase into the cytosol. Similarly, isoform beta-II is autophosphorylated on 'Thr-641' and 'Ser-660', subsequent to phosphorylation on Thr-500. Autophosphorylated on other sites i.e. in the N-terminal and hinge regions have no effect on enzyme activity. Phosphorylation at Tyr-662 by SYK induces binding with GRB2 and contributes to the activation of MAPK/ERK signaling cascade.</text>
</comment>
<comment type="similarity">
    <text evidence="21">Belongs to the protein kinase superfamily. AGC Ser/Thr protein kinase family. PKC subfamily.</text>
</comment>
<name>KPCB_RAT</name>
<organism>
    <name type="scientific">Rattus norvegicus</name>
    <name type="common">Rat</name>
    <dbReference type="NCBI Taxonomy" id="10116"/>
    <lineage>
        <taxon>Eukaryota</taxon>
        <taxon>Metazoa</taxon>
        <taxon>Chordata</taxon>
        <taxon>Craniata</taxon>
        <taxon>Vertebrata</taxon>
        <taxon>Euteleostomi</taxon>
        <taxon>Mammalia</taxon>
        <taxon>Eutheria</taxon>
        <taxon>Euarchontoglires</taxon>
        <taxon>Glires</taxon>
        <taxon>Rodentia</taxon>
        <taxon>Myomorpha</taxon>
        <taxon>Muroidea</taxon>
        <taxon>Muridae</taxon>
        <taxon>Murinae</taxon>
        <taxon>Rattus</taxon>
    </lineage>
</organism>
<feature type="initiator methionine" description="Removed" evidence="2">
    <location>
        <position position="1"/>
    </location>
</feature>
<feature type="chain" id="PRO_0000055687" description="Protein kinase C beta type">
    <location>
        <begin position="2"/>
        <end position="671"/>
    </location>
</feature>
<feature type="domain" description="C2" evidence="4">
    <location>
        <begin position="158"/>
        <end position="275"/>
    </location>
</feature>
<feature type="domain" description="Protein kinase" evidence="5">
    <location>
        <begin position="342"/>
        <end position="600"/>
    </location>
</feature>
<feature type="domain" description="AGC-kinase C-terminal" evidence="7">
    <location>
        <begin position="601"/>
        <end position="671"/>
    </location>
</feature>
<feature type="zinc finger region" description="Phorbol-ester/DAG-type 1" evidence="6">
    <location>
        <begin position="36"/>
        <end position="86"/>
    </location>
</feature>
<feature type="zinc finger region" description="Phorbol-ester/DAG-type 2" evidence="6">
    <location>
        <begin position="101"/>
        <end position="151"/>
    </location>
</feature>
<feature type="region of interest" description="Disordered" evidence="9">
    <location>
        <begin position="614"/>
        <end position="635"/>
    </location>
</feature>
<feature type="compositionally biased region" description="Basic and acidic residues" evidence="9">
    <location>
        <begin position="623"/>
        <end position="635"/>
    </location>
</feature>
<feature type="active site" description="Proton acceptor" evidence="5 8">
    <location>
        <position position="466"/>
    </location>
</feature>
<feature type="binding site" evidence="13 18">
    <location>
        <position position="186"/>
    </location>
    <ligand>
        <name>Ca(2+)</name>
        <dbReference type="ChEBI" id="CHEBI:29108"/>
        <label>1</label>
    </ligand>
</feature>
<feature type="binding site" evidence="13 18">
    <location>
        <position position="187"/>
    </location>
    <ligand>
        <name>Ca(2+)</name>
        <dbReference type="ChEBI" id="CHEBI:29108"/>
        <label>1</label>
    </ligand>
</feature>
<feature type="binding site" evidence="13 18">
    <location>
        <position position="187"/>
    </location>
    <ligand>
        <name>Ca(2+)</name>
        <dbReference type="ChEBI" id="CHEBI:29108"/>
        <label>2</label>
    </ligand>
</feature>
<feature type="binding site" evidence="13 18">
    <location>
        <position position="193"/>
    </location>
    <ligand>
        <name>Ca(2+)</name>
        <dbReference type="ChEBI" id="CHEBI:29108"/>
        <label>2</label>
    </ligand>
</feature>
<feature type="binding site" evidence="13 18">
    <location>
        <position position="246"/>
    </location>
    <ligand>
        <name>Ca(2+)</name>
        <dbReference type="ChEBI" id="CHEBI:29108"/>
        <label>1</label>
    </ligand>
</feature>
<feature type="binding site" evidence="13 18">
    <location>
        <position position="246"/>
    </location>
    <ligand>
        <name>Ca(2+)</name>
        <dbReference type="ChEBI" id="CHEBI:29108"/>
        <label>2</label>
    </ligand>
</feature>
<feature type="binding site" evidence="13 18">
    <location>
        <position position="247"/>
    </location>
    <ligand>
        <name>Ca(2+)</name>
        <dbReference type="ChEBI" id="CHEBI:29108"/>
        <label>2</label>
    </ligand>
</feature>
<feature type="binding site" evidence="13 18">
    <location>
        <position position="248"/>
    </location>
    <ligand>
        <name>Ca(2+)</name>
        <dbReference type="ChEBI" id="CHEBI:29108"/>
        <label>1</label>
    </ligand>
</feature>
<feature type="binding site" evidence="13 18">
    <location>
        <position position="248"/>
    </location>
    <ligand>
        <name>Ca(2+)</name>
        <dbReference type="ChEBI" id="CHEBI:29108"/>
        <label>2</label>
    </ligand>
</feature>
<feature type="binding site" evidence="13 18">
    <location>
        <position position="248"/>
    </location>
    <ligand>
        <name>Ca(2+)</name>
        <dbReference type="ChEBI" id="CHEBI:29108"/>
        <label>3</label>
    </ligand>
</feature>
<feature type="binding site" evidence="13 18">
    <location>
        <position position="251"/>
    </location>
    <ligand>
        <name>Ca(2+)</name>
        <dbReference type="ChEBI" id="CHEBI:29108"/>
        <label>3</label>
    </ligand>
</feature>
<feature type="binding site" evidence="13 18">
    <location>
        <position position="252"/>
    </location>
    <ligand>
        <name>Ca(2+)</name>
        <dbReference type="ChEBI" id="CHEBI:29108"/>
        <label>3</label>
    </ligand>
</feature>
<feature type="binding site" evidence="13 18">
    <location>
        <position position="254"/>
    </location>
    <ligand>
        <name>Ca(2+)</name>
        <dbReference type="ChEBI" id="CHEBI:29108"/>
        <label>1</label>
    </ligand>
</feature>
<feature type="binding site" evidence="13 18">
    <location>
        <position position="254"/>
    </location>
    <ligand>
        <name>Ca(2+)</name>
        <dbReference type="ChEBI" id="CHEBI:29108"/>
        <label>3</label>
    </ligand>
</feature>
<feature type="binding site" evidence="5">
    <location>
        <begin position="348"/>
        <end position="356"/>
    </location>
    <ligand>
        <name>ATP</name>
        <dbReference type="ChEBI" id="CHEBI:30616"/>
    </ligand>
</feature>
<feature type="binding site" evidence="5">
    <location>
        <position position="371"/>
    </location>
    <ligand>
        <name>ATP</name>
        <dbReference type="ChEBI" id="CHEBI:30616"/>
    </ligand>
</feature>
<feature type="modified residue" description="N-acetylalanine" evidence="2">
    <location>
        <position position="2"/>
    </location>
</feature>
<feature type="modified residue" description="Phosphoserine" evidence="25">
    <location>
        <position position="11"/>
    </location>
</feature>
<feature type="modified residue" description="Phosphoserine; by autocatalysis" evidence="16">
    <location>
        <position position="16"/>
    </location>
</feature>
<feature type="modified residue" description="Phosphothreonine; by autocatalysis" evidence="16">
    <location>
        <position position="17"/>
    </location>
</feature>
<feature type="modified residue" description="Phosphoserine" evidence="2">
    <location>
        <position position="206"/>
    </location>
</feature>
<feature type="modified residue" description="Phosphothreonine; by autocatalysis" evidence="1">
    <location>
        <position position="250"/>
    </location>
</feature>
<feature type="modified residue" description="Phosphothreonine; by autocatalysis" evidence="16">
    <location>
        <position position="314"/>
    </location>
</feature>
<feature type="modified residue" description="Phosphothreonine; by autocatalysis" evidence="16">
    <location>
        <position position="324"/>
    </location>
</feature>
<feature type="modified residue" description="Phosphothreonine; by PDPK1" evidence="22 23 24">
    <location>
        <position position="500"/>
    </location>
</feature>
<feature type="modified residue" description="Phosphothreonine" evidence="2">
    <location>
        <position position="504"/>
    </location>
</feature>
<feature type="modified residue" description="Phosphothreonine; by autocatalysis" evidence="16">
    <location>
        <position position="635"/>
    </location>
</feature>
<feature type="modified residue" description="Phosphothreonine; by autocatalysis" evidence="13 16 17 25">
    <location>
        <position position="642"/>
    </location>
</feature>
<feature type="modified residue" description="Phosphoserine; by autocatalysis" evidence="13 17">
    <location>
        <position position="661"/>
    </location>
</feature>
<feature type="modified residue" description="Phosphotyrosine; by SYK" evidence="3">
    <location>
        <position position="662"/>
    </location>
</feature>
<feature type="splice variant" id="VSP_004739" description="In isoform Beta-II." evidence="19 20">
    <original>RDKRDTSNFDKEFTRQPVELTPTDKLFIMNLDQNEFAGFSYTNPEFVINV</original>
    <variation>CGRNAENFDRFFTRHPPVLTPPDQEVIRNIDQSEFEGFSFVNSEFLKPEVKS</variation>
    <location>
        <begin position="622"/>
        <end position="671"/>
    </location>
</feature>
<feature type="mutagenesis site" description="No effect." evidence="16">
    <original>ST</original>
    <variation>AA</variation>
    <location>
        <begin position="16"/>
        <end position="17"/>
    </location>
</feature>
<feature type="mutagenesis site" description="No effect; when associated with A-323." evidence="16">
    <original>T</original>
    <variation>A</variation>
    <location>
        <position position="314"/>
    </location>
</feature>
<feature type="mutagenesis site" description="No effect; when associated with A-313." evidence="16">
    <original>T</original>
    <variation>A</variation>
    <location>
        <position position="324"/>
    </location>
</feature>
<feature type="mutagenesis site" description="50% increase of enzymatic activity." evidence="14">
    <original>T</original>
    <variation>E</variation>
    <location>
        <position position="500"/>
    </location>
</feature>
<feature type="mutagenesis site" description="50% decrease of enzymatic activity." evidence="14">
    <original>T</original>
    <variation>S</variation>
    <location>
        <position position="500"/>
    </location>
</feature>
<feature type="mutagenesis site" description="Loss of enzymatic activity." evidence="14">
    <original>T</original>
    <variation>V</variation>
    <variation>D</variation>
    <location>
        <position position="500"/>
    </location>
</feature>
<feature type="mutagenesis site" description="Loss of enzymatic activity; when associated with T-643 change in subcellular location, loss of PMA-induced down-regulation and loss of enzymatic activity." evidence="15 16">
    <original>T</original>
    <variation>A</variation>
    <location>
        <position position="635"/>
    </location>
</feature>
<feature type="mutagenesis site" description="Loss of enzymatic activity; when associated with T-636 change in subcellular location, loss of PMA-induced down-regulation and loss of enzymatic activity." evidence="15 16">
    <original>T</original>
    <variation>A</variation>
    <location>
        <position position="642"/>
    </location>
</feature>
<feature type="sequence conflict" description="In Ref. 3; AAA41868." evidence="21" ref="3">
    <original>A</original>
    <variation>P</variation>
    <location>
        <position position="25"/>
    </location>
</feature>
<feature type="sequence conflict" description="In Ref. 1; AAA41875." evidence="21" ref="1">
    <original>I</original>
    <variation>V</variation>
    <location>
        <position position="126"/>
    </location>
</feature>
<feature type="sequence conflict" description="In Ref. 1; AAA41875." evidence="21" ref="1">
    <original>N</original>
    <variation>S</variation>
    <location>
        <position position="138"/>
    </location>
</feature>
<feature type="sequence conflict" description="In Ref. 1; AAA41875." evidence="21" ref="1">
    <original>K</original>
    <variation>R</variation>
    <location>
        <position position="141"/>
    </location>
</feature>
<feature type="sequence conflict" description="In Ref. 1; AAA41875." evidence="21" ref="1">
    <original>S</original>
    <variation>G</variation>
    <location>
        <position position="149"/>
    </location>
</feature>
<feature type="sequence conflict" description="In Ref. 1; AAA41875." evidence="21" ref="1">
    <original>I</original>
    <variation>V</variation>
    <location>
        <position position="164"/>
    </location>
</feature>
<feature type="sequence conflict" description="In Ref. 1; AAA41875." evidence="21" ref="1">
    <original>RE</original>
    <variation>GG</variation>
    <location>
        <begin position="170"/>
        <end position="171"/>
    </location>
</feature>
<feature type="sequence conflict" description="In Ref. 1; AAA41875." evidence="21" ref="1">
    <original>I</original>
    <variation>V</variation>
    <location>
        <position position="174"/>
    </location>
</feature>
<feature type="sequence conflict" description="In Ref. 3; AAA41868." evidence="21" ref="3">
    <original>G</original>
    <variation>E</variation>
    <location>
        <position position="294"/>
    </location>
</feature>
<feature type="sequence conflict" description="In Ref. 2; CAA28035/CAA28036." evidence="21" ref="2">
    <original>V</original>
    <variation>M</variation>
    <location>
        <position position="419"/>
    </location>
</feature>
<feature type="sequence conflict" description="In Ref. 1; AAA41865." evidence="21" ref="1">
    <location>
        <position position="628"/>
    </location>
</feature>
<feature type="sequence conflict" description="In Ref. 1; AAA41865." evidence="21" ref="1">
    <location>
        <position position="640"/>
    </location>
</feature>
<feature type="strand" evidence="26">
    <location>
        <begin position="161"/>
        <end position="182"/>
    </location>
</feature>
<feature type="strand" evidence="26">
    <location>
        <begin position="194"/>
        <end position="202"/>
    </location>
</feature>
<feature type="strand" evidence="26">
    <location>
        <begin position="222"/>
        <end position="230"/>
    </location>
</feature>
<feature type="helix" evidence="26">
    <location>
        <begin position="234"/>
        <end position="237"/>
    </location>
</feature>
<feature type="strand" evidence="26">
    <location>
        <begin position="239"/>
        <end position="246"/>
    </location>
</feature>
<feature type="strand" evidence="26">
    <location>
        <begin position="249"/>
        <end position="251"/>
    </location>
</feature>
<feature type="strand" evidence="26">
    <location>
        <begin position="254"/>
        <end position="262"/>
    </location>
</feature>
<feature type="helix" evidence="26">
    <location>
        <begin position="263"/>
        <end position="266"/>
    </location>
</feature>
<feature type="strand" evidence="26">
    <location>
        <begin position="271"/>
        <end position="276"/>
    </location>
</feature>
<feature type="helix" evidence="26">
    <location>
        <begin position="280"/>
        <end position="283"/>
    </location>
</feature>
<feature type="modified residue" description="Phosphothreonine" evidence="25">
    <location sequence="P68403-2">
        <position position="641"/>
    </location>
</feature>
<feature type="modified residue" description="Phosphoserine" evidence="25">
    <location sequence="P68403-2">
        <position position="654"/>
    </location>
</feature>
<feature type="modified residue" description="Phosphoserine" evidence="25">
    <location sequence="P68403-2">
        <position position="660"/>
    </location>
</feature>
<feature type="modified residue" description="Phosphoserine" evidence="25">
    <location sequence="P68403-2">
        <position position="664"/>
    </location>
</feature>
<proteinExistence type="evidence at protein level"/>
<reference key="1">
    <citation type="journal article" date="1986" name="Cell">
        <title>Cloning and expression of multiple protein kinase C cDNAs.</title>
        <authorList>
            <person name="Knopf J.L."/>
            <person name="Lee M.-H."/>
            <person name="Sultzman L.A."/>
            <person name="Kriz R.W."/>
            <person name="Loomis C.R."/>
            <person name="Hewick R.M."/>
            <person name="Bell R.M."/>
        </authorList>
    </citation>
    <scope>NUCLEOTIDE SEQUENCE [MRNA] (ISOFORMS BETA-I AND BETA-II)</scope>
</reference>
<reference key="2">
    <citation type="journal article" date="1986" name="FEBS Lett.">
        <title>Two types of complementary DNAs of rat brain protein kinase C. Heterogeneity determined by alternative splicing.</title>
        <authorList>
            <person name="Ono Y."/>
            <person name="Kurokawa T."/>
            <person name="Fujii T."/>
            <person name="Kawahara K."/>
            <person name="Igarashi K."/>
            <person name="Kikkawa U."/>
            <person name="Ogita K."/>
            <person name="Nishizuka Y."/>
        </authorList>
    </citation>
    <scope>NUCLEOTIDE SEQUENCE [GENOMIC DNA / MRNA] (ISOFORMS BETA-I AND BETA-II)</scope>
    <source>
        <tissue>Brain</tissue>
    </source>
</reference>
<reference key="3">
    <citation type="journal article" date="1988" name="Cell">
        <title>Overproduction of protein kinase C causes disordered growth control in rat fibroblasts.</title>
        <authorList>
            <person name="Housey G.M."/>
            <person name="Johnson M.D."/>
            <person name="Hsiao W.L.W."/>
            <person name="O'Brian C.A."/>
            <person name="Murphy J.P."/>
            <person name="Kirschmeier P."/>
            <person name="Weinstein I.B."/>
        </authorList>
    </citation>
    <scope>NUCLEOTIDE SEQUENCE [MRNA] (ISOFORM BETA-I)</scope>
    <source>
        <tissue>Fibroblast</tissue>
    </source>
</reference>
<reference key="4">
    <citation type="journal article" date="1986" name="FEBS Lett.">
        <title>Cloning of rat brain protein kinase C complementary DNA.</title>
        <authorList>
            <person name="Ono Y."/>
            <person name="Kurokawa T."/>
            <person name="Kawahara K."/>
            <person name="Nishimura O."/>
            <person name="Marumoto R."/>
            <person name="Igarashi K."/>
            <person name="Sugino Y."/>
            <person name="Kikkawa U."/>
            <person name="Ogita K."/>
            <person name="Nishizuka Y."/>
        </authorList>
    </citation>
    <scope>NUCLEOTIDE SEQUENCE [MRNA] OF 448-671 (ISOFORM BETA-I)</scope>
</reference>
<reference key="5">
    <citation type="journal article" date="1987" name="Proc. Natl. Acad. Sci. U.S.A.">
        <title>Isolation of cDNA clones encoding protein kinase C: evidence for a protein kinase C-related gene family.</title>
        <authorList>
            <person name="Housey G.M."/>
            <person name="O'Brian C.A."/>
            <person name="Johnson M.D."/>
            <person name="Kirschmeier P."/>
            <person name="Weinstein I.B."/>
        </authorList>
    </citation>
    <scope>NUCLEOTIDE SEQUENCE [MRNA] OF 448-671 (ISOFORM BETA-I)</scope>
</reference>
<reference key="6">
    <citation type="journal article" date="1995" name="Curr. Biol.">
        <title>Protein kinase C is regulated in vivo by three functionally distinct phosphorylations.</title>
        <authorList>
            <person name="Keranen L.M."/>
            <person name="Dutil E.M."/>
            <person name="Newton A.C."/>
        </authorList>
    </citation>
    <scope>PROTEIN SEQUENCE OF 500-520 AND 636-663 (ISOFORM BETA-II)</scope>
    <scope>PHOSPHORYLATION AT THR-500; THR-642 AND SER-661</scope>
</reference>
<reference key="7">
    <citation type="journal article" date="1993" name="Proc. Natl. Acad. Sci. U.S.A.">
        <title>Characterization of site-specific mutants altered at protein kinase C beta 1 isozyme autophosphorylation sites.</title>
        <authorList>
            <person name="Zhang J."/>
            <person name="Wang L."/>
            <person name="Petrin J."/>
            <person name="Bishop W.R."/>
            <person name="Bond R.W."/>
        </authorList>
    </citation>
    <scope>PHOSPHORYLATION AT SER-16; THR-17; THR-314; THR-324; THR-635 AND THR-642</scope>
    <scope>MUTAGENESIS OF 16-SER-THR-17; THR-314; THR-324; THR-635 AND THR-642</scope>
</reference>
<reference key="8">
    <citation type="journal article" date="1994" name="J. Biol. Chem.">
        <title>Phosphorylation of Thr642 is an early event in the processing of newly synthesized protein kinase C beta 1 and is essential for its activation.</title>
        <authorList>
            <person name="Zhang J."/>
            <person name="Wang L."/>
            <person name="Schwartz J."/>
            <person name="Bond R.W."/>
            <person name="Bishop W.R."/>
        </authorList>
    </citation>
    <scope>PHOSPHORYLATION AT THR-642 (ISOFORM BETA-I)</scope>
    <scope>MUTAGENESIS OF THR-635 AND THR-642</scope>
</reference>
<reference key="9">
    <citation type="journal article" date="1994" name="J. Biol. Chem.">
        <title>Requirement for negative charge on 'activation loop' of protein kinase C.</title>
        <authorList>
            <person name="Orr J.W."/>
            <person name="Newton A.C."/>
        </authorList>
    </citation>
    <scope>PHOSPHORYLATION AT THR-500</scope>
    <scope>MUTAGENESIS OF THR-500</scope>
</reference>
<reference key="10">
    <citation type="journal article" date="2000" name="Mol. Cell. Biol.">
        <title>Insulin-activated protein kinase Cbeta bypasses Ras and stimulates mitogen-activated protein kinase activity and cell proliferation in muscle cells.</title>
        <authorList>
            <person name="Formisano P."/>
            <person name="Oriente F."/>
            <person name="Fiory F."/>
            <person name="Caruso M."/>
            <person name="Miele C."/>
            <person name="Maitan M.A."/>
            <person name="Andreozzi F."/>
            <person name="Vigliotta G."/>
            <person name="Condorelli G."/>
            <person name="Beguinot F."/>
        </authorList>
    </citation>
    <scope>FUNCTION IN INSULIN SIGNALING</scope>
</reference>
<reference key="11">
    <citation type="journal article" date="2002" name="J. Biol. Chem.">
        <title>Involvement of protein kinase C beta 2 in c-myc induction by high glucose in pancreatic beta-cells.</title>
        <authorList>
            <person name="Kaneto H."/>
            <person name="Suzuma K."/>
            <person name="Sharma A."/>
            <person name="Bonner-Weir S."/>
            <person name="King G.L."/>
            <person name="Weir G.C."/>
        </authorList>
    </citation>
    <scope>FUNCTION IN INSULIN SIGNALING</scope>
</reference>
<reference key="12">
    <citation type="journal article" date="2009" name="J. Biol. Chem.">
        <title>Phosphorylation of activation transcription factor-2 at serine 121 by protein kinase c controls c-Jun-mediated activation of transcription.</title>
        <authorList>
            <person name="Yamasaki T."/>
            <person name="Takahashi A."/>
            <person name="Pan J."/>
            <person name="Yamaguchi N."/>
            <person name="Yokoyama K.K."/>
        </authorList>
    </citation>
    <scope>FUNCTION</scope>
</reference>
<reference key="13">
    <citation type="journal article" date="2012" name="Nat. Commun.">
        <title>Quantitative maps of protein phosphorylation sites across 14 different rat organs and tissues.</title>
        <authorList>
            <person name="Lundby A."/>
            <person name="Secher A."/>
            <person name="Lage K."/>
            <person name="Nordsborg N.B."/>
            <person name="Dmytriyev A."/>
            <person name="Lundby C."/>
            <person name="Olsen J.V."/>
        </authorList>
    </citation>
    <scope>PHOSPHORYLATION [LARGE SCALE ANALYSIS] AT SER-11 AND THR-642</scope>
    <scope>PHOSPHORYLATION [LARGE SCALE ANALYSIS] AT THR-641; SER-654; SER-660 AND SER-664 (ISOFORM BETA-II)</scope>
    <scope>IDENTIFICATION BY MASS SPECTROMETRY [LARGE SCALE ANALYSIS]</scope>
</reference>
<reference key="14">
    <citation type="journal article" date="1998" name="Structure">
        <title>Structure of the protein kinase Cbeta phospholipid-binding C2 domain complexed with Ca2+.</title>
        <authorList>
            <person name="Sutton R.B."/>
            <person name="Sprang S.R."/>
        </authorList>
    </citation>
    <scope>X-RAY CRYSTALLOGRAPHY (2.7 ANGSTROMS) OF 157-288 IN COMPLEX WITH CALCIUM IONS</scope>
    <scope>COFACTOR</scope>
</reference>
<reference key="15">
    <citation type="journal article" date="2011" name="Cell">
        <title>Crystal structure and allosteric activation of protein kinase C betaII.</title>
        <authorList>
            <person name="Leonard T.A."/>
            <person name="Rozycki B."/>
            <person name="Saidi L.F."/>
            <person name="Hummer G."/>
            <person name="Hurley J.H."/>
        </authorList>
    </citation>
    <scope>X-RAY CRYSTALLOGRAPHY (4.00 ANGSTROMS) OF 1-661 IN COMPLEX WITH CALCIUM IONS</scope>
    <scope>COFACTOR</scope>
    <scope>PHOSPHORYLATION AT THR-500; THR-642 AND SER-661</scope>
</reference>